<accession>Q9X216</accession>
<evidence type="ECO:0000255" key="1">
    <source>
        <dbReference type="HAMAP-Rule" id="MF_01503"/>
    </source>
</evidence>
<keyword id="KW-1185">Reference proteome</keyword>
<reference key="1">
    <citation type="journal article" date="1999" name="Nature">
        <title>Evidence for lateral gene transfer between Archaea and Bacteria from genome sequence of Thermotoga maritima.</title>
        <authorList>
            <person name="Nelson K.E."/>
            <person name="Clayton R.A."/>
            <person name="Gill S.R."/>
            <person name="Gwinn M.L."/>
            <person name="Dodson R.J."/>
            <person name="Haft D.H."/>
            <person name="Hickey E.K."/>
            <person name="Peterson J.D."/>
            <person name="Nelson W.C."/>
            <person name="Ketchum K.A."/>
            <person name="McDonald L.A."/>
            <person name="Utterback T.R."/>
            <person name="Malek J.A."/>
            <person name="Linher K.D."/>
            <person name="Garrett M.M."/>
            <person name="Stewart A.M."/>
            <person name="Cotton M.D."/>
            <person name="Pratt M.S."/>
            <person name="Phillips C.A."/>
            <person name="Richardson D.L."/>
            <person name="Heidelberg J.F."/>
            <person name="Sutton G.G."/>
            <person name="Fleischmann R.D."/>
            <person name="Eisen J.A."/>
            <person name="White O."/>
            <person name="Salzberg S.L."/>
            <person name="Smith H.O."/>
            <person name="Venter J.C."/>
            <person name="Fraser C.M."/>
        </authorList>
    </citation>
    <scope>NUCLEOTIDE SEQUENCE [LARGE SCALE GENOMIC DNA]</scope>
    <source>
        <strain>ATCC 43589 / DSM 3109 / JCM 10099 / NBRC 100826 / MSB8</strain>
    </source>
</reference>
<proteinExistence type="inferred from homology"/>
<comment type="similarity">
    <text evidence="1">Belongs to the RemA family.</text>
</comment>
<organism>
    <name type="scientific">Thermotoga maritima (strain ATCC 43589 / DSM 3109 / JCM 10099 / NBRC 100826 / MSB8)</name>
    <dbReference type="NCBI Taxonomy" id="243274"/>
    <lineage>
        <taxon>Bacteria</taxon>
        <taxon>Thermotogati</taxon>
        <taxon>Thermotogota</taxon>
        <taxon>Thermotogae</taxon>
        <taxon>Thermotogales</taxon>
        <taxon>Thermotogaceae</taxon>
        <taxon>Thermotoga</taxon>
    </lineage>
</organism>
<protein>
    <recommendedName>
        <fullName evidence="1">Putative regulatory protein TM_1690</fullName>
    </recommendedName>
</protein>
<dbReference type="EMBL" id="AE000512">
    <property type="protein sequence ID" value="AAD36757.1"/>
    <property type="molecule type" value="Genomic_DNA"/>
</dbReference>
<dbReference type="PIR" id="D72223">
    <property type="entry name" value="D72223"/>
</dbReference>
<dbReference type="RefSeq" id="NP_229490.1">
    <property type="nucleotide sequence ID" value="NC_000853.1"/>
</dbReference>
<dbReference type="RefSeq" id="WP_004082206.1">
    <property type="nucleotide sequence ID" value="NZ_CP011107.1"/>
</dbReference>
<dbReference type="SMR" id="Q9X216"/>
<dbReference type="FunCoup" id="Q9X216">
    <property type="interactions" value="2"/>
</dbReference>
<dbReference type="STRING" id="243274.TM_1690"/>
<dbReference type="PaxDb" id="243274-THEMA_05790"/>
<dbReference type="EnsemblBacteria" id="AAD36757">
    <property type="protein sequence ID" value="AAD36757"/>
    <property type="gene ID" value="TM_1690"/>
</dbReference>
<dbReference type="KEGG" id="tma:TM1690"/>
<dbReference type="KEGG" id="tmi:THEMA_05790"/>
<dbReference type="KEGG" id="tmm:Tmari_1698"/>
<dbReference type="KEGG" id="tmw:THMA_1732"/>
<dbReference type="eggNOG" id="COG2052">
    <property type="taxonomic scope" value="Bacteria"/>
</dbReference>
<dbReference type="InParanoid" id="Q9X216"/>
<dbReference type="OrthoDB" id="5432174at2"/>
<dbReference type="Proteomes" id="UP000008183">
    <property type="component" value="Chromosome"/>
</dbReference>
<dbReference type="HAMAP" id="MF_01503">
    <property type="entry name" value="RemA"/>
    <property type="match status" value="1"/>
</dbReference>
<dbReference type="InterPro" id="IPR007169">
    <property type="entry name" value="RemA-like"/>
</dbReference>
<dbReference type="NCBIfam" id="NF003315">
    <property type="entry name" value="PRK04323.1"/>
    <property type="match status" value="1"/>
</dbReference>
<dbReference type="PANTHER" id="PTHR38449:SF1">
    <property type="entry name" value="REGULATORY PROTEIN SSL2874-RELATED"/>
    <property type="match status" value="1"/>
</dbReference>
<dbReference type="PANTHER" id="PTHR38449">
    <property type="entry name" value="REGULATORY PROTEIN TM_1690-RELATED"/>
    <property type="match status" value="1"/>
</dbReference>
<dbReference type="Pfam" id="PF04025">
    <property type="entry name" value="RemA-like"/>
    <property type="match status" value="1"/>
</dbReference>
<sequence length="92" mass="10437">MYGLINIGFGNVVAGDRVIAIVNPESSPLKRMKDEAKLEGKLIDATYGRKTRSIIITDSNHIILSAIQPETIAQRFMENFYEIERVLRETKK</sequence>
<gene>
    <name type="ordered locus">TM_1690</name>
</gene>
<feature type="chain" id="PRO_0000050239" description="Putative regulatory protein TM_1690">
    <location>
        <begin position="1"/>
        <end position="92"/>
    </location>
</feature>
<name>Y1690_THEMA</name>